<organism>
    <name type="scientific">Pongo abelii</name>
    <name type="common">Sumatran orangutan</name>
    <name type="synonym">Pongo pygmaeus abelii</name>
    <dbReference type="NCBI Taxonomy" id="9601"/>
    <lineage>
        <taxon>Eukaryota</taxon>
        <taxon>Metazoa</taxon>
        <taxon>Chordata</taxon>
        <taxon>Craniata</taxon>
        <taxon>Vertebrata</taxon>
        <taxon>Euteleostomi</taxon>
        <taxon>Mammalia</taxon>
        <taxon>Eutheria</taxon>
        <taxon>Euarchontoglires</taxon>
        <taxon>Primates</taxon>
        <taxon>Haplorrhini</taxon>
        <taxon>Catarrhini</taxon>
        <taxon>Hominidae</taxon>
        <taxon>Pongo</taxon>
    </lineage>
</organism>
<comment type="function">
    <text evidence="4">mRNA cap-binding component of the eukaryotic translation initiation factor 3 (eIF-3) complex, a complex required for several steps in the initiation of protein synthesis of a specialized repertoire of mRNAs. The eIF-3 complex associates with the 40S ribosome and facilitates the recruitment of eIF-1, eIF-1A, eIF-2:GTP:methionyl-tRNAi and eIF-5 to form the 43S pre-initiation complex (43S PIC). The eIF-3 complex stimulates mRNA recruitment to the 43S PIC and scanning of the mRNA for AUG recognition. The eIF-3 complex is also required for disassembly and recycling of post-termination ribosomal complexes and subsequently prevents premature joining of the 40S and 60S ribosomal subunits prior to initiation. The eIF-3 complex specifically targets and initiates translation of a subset of mRNAs involved in cell proliferation, including cell cycling, differentiation and apoptosis, and uses different modes of RNA stem-loop binding to exert either translational activation or repression. In the eIF-3 complex, EIF3D specifically recognizes and binds the 7-methylguanosine cap of a subset of mRNAs.</text>
</comment>
<comment type="subunit">
    <text evidence="4">Component of the eukaryotic translation initiation factor 3 (eIF-3) complex, which is composed of 13 subunits: EIF3A, EIF3B, EIF3C, EIF3D, EIF3E, EIF3F, EIF3G, EIF3H, EIF3I, EIF3J, EIF3K, EIF3L and EIF3M. The eIF-3 complex appears to include 3 stable modules: module A is composed of EIF3A, EIF3B, EIF3G and EIF3I; module B is composed of EIF3F, EIF3H, and EIF3M; and module C is composed of EIF3C, EIF3D, EIF3E, EIF3K and EIF3L. EIF3C of module C binds EIF3B of module A and EIF3H of module B, thereby linking the three modules. EIF3J is a labile subunit that binds to the eIF-3 complex via EIF3B. The eIF-3 complex interacts with RPS6KB1 under conditions of nutrient depletion. Mitogenic stimulation leads to binding and activation of a complex composed of MTOR and RPTOR, leading to phosphorylation and release of RPS6KB1 and binding of EIF4B to eIF-3.</text>
</comment>
<comment type="subcellular location">
    <subcellularLocation>
        <location evidence="4">Cytoplasm</location>
    </subcellularLocation>
</comment>
<comment type="domain">
    <text evidence="4">The RNA gate region regulates mRNA cap recognition to prevent promiscuous mRNA-binding before assembly of eif3d into the full eukaryotic translation initiation factor 3 (eIF-3) complex.</text>
</comment>
<comment type="similarity">
    <text evidence="4">Belongs to the eIF-3 subunit D family.</text>
</comment>
<reference key="1">
    <citation type="submission" date="2004-11" db="EMBL/GenBank/DDBJ databases">
        <authorList>
            <consortium name="The German cDNA consortium"/>
        </authorList>
    </citation>
    <scope>NUCLEOTIDE SEQUENCE [LARGE SCALE MRNA]</scope>
    <source>
        <tissue>Heart</tissue>
    </source>
</reference>
<accession>Q5R925</accession>
<sequence length="548" mass="63957">MAKFMTPVIQDNPSGWGPCAVPEQFRDMPYQPFSKGDRLGKVADWTGATYQDKRYTNKYSSQFGGGSQYAYFHEEDESSFQLVDTARTQKTAYQRNRMRFAQRNLRRDKDRRNMLQFNLQILPKSAKQKERERIRLQKKFQKQFGVRQKWDQKSQKPRDSSVEVRSDWEVKEEMDFPQLMKMRYLEVSEPQDIECCGALEYYDKAFDRITTRSEKPLRSIKRIFHTVTTTDDPVIRKLAKTQGNVFATDAILATLMSCTRSVYSWDIVVQRVGSKLFFDKRDNSDFDLPTVSETANEPPQDEGNSFNSPRNLAMEATYINHNFSQQCLRMGKERYNFPNPNPFVEDDMDKNEIASVAYRYRRWKLGDDIDLIVRCEHDGVMTGANGEVSFINIKTLNEWDSRHCNGVDWRQKLDSQRGAVIATELKNNSYKLARWTCCALLAGSEYLKLGYVSRYHVKDSSRHVILGTQQFKPNEFASQINLSVENAWGILRCVIDICMKLEEGKYLILKDPNKQVIRVYSLPDGTFSSDEDEEEEEEEEEEEEEEET</sequence>
<feature type="chain" id="PRO_0000292661" description="Eukaryotic translation initiation factor 3 subunit D">
    <location>
        <begin position="1"/>
        <end position="548"/>
    </location>
</feature>
<feature type="region of interest" description="RNA gate" evidence="1">
    <location>
        <begin position="285"/>
        <end position="299"/>
    </location>
</feature>
<feature type="region of interest" description="Disordered" evidence="5">
    <location>
        <begin position="288"/>
        <end position="309"/>
    </location>
</feature>
<feature type="region of interest" description="Disordered" evidence="5">
    <location>
        <begin position="523"/>
        <end position="548"/>
    </location>
</feature>
<feature type="compositionally biased region" description="Polar residues" evidence="5">
    <location>
        <begin position="291"/>
        <end position="309"/>
    </location>
</feature>
<feature type="compositionally biased region" description="Acidic residues" evidence="5">
    <location>
        <begin position="529"/>
        <end position="548"/>
    </location>
</feature>
<feature type="modified residue" description="N6-acetyllysine" evidence="3">
    <location>
        <position position="53"/>
    </location>
</feature>
<feature type="modified residue" description="Phosphoserine" evidence="2">
    <location>
        <position position="161"/>
    </location>
</feature>
<feature type="modified residue" description="Phosphoserine" evidence="2">
    <location>
        <position position="528"/>
    </location>
</feature>
<feature type="modified residue" description="Phosphoserine" evidence="2">
    <location>
        <position position="529"/>
    </location>
</feature>
<evidence type="ECO:0000250" key="1">
    <source>
        <dbReference type="UniProtKB" id="K7IM66"/>
    </source>
</evidence>
<evidence type="ECO:0000250" key="2">
    <source>
        <dbReference type="UniProtKB" id="O15371"/>
    </source>
</evidence>
<evidence type="ECO:0000250" key="3">
    <source>
        <dbReference type="UniProtKB" id="O70194"/>
    </source>
</evidence>
<evidence type="ECO:0000255" key="4">
    <source>
        <dbReference type="HAMAP-Rule" id="MF_03003"/>
    </source>
</evidence>
<evidence type="ECO:0000256" key="5">
    <source>
        <dbReference type="SAM" id="MobiDB-lite"/>
    </source>
</evidence>
<keyword id="KW-0007">Acetylation</keyword>
<keyword id="KW-0963">Cytoplasm</keyword>
<keyword id="KW-0396">Initiation factor</keyword>
<keyword id="KW-0597">Phosphoprotein</keyword>
<keyword id="KW-0648">Protein biosynthesis</keyword>
<keyword id="KW-1185">Reference proteome</keyword>
<keyword id="KW-0694">RNA-binding</keyword>
<gene>
    <name evidence="4" type="primary">EIF3D</name>
    <name evidence="4" type="synonym">EIF3S7</name>
</gene>
<dbReference type="EMBL" id="CR859571">
    <property type="protein sequence ID" value="CAH91735.1"/>
    <property type="molecule type" value="mRNA"/>
</dbReference>
<dbReference type="RefSeq" id="NP_001126007.1">
    <property type="nucleotide sequence ID" value="NM_001132535.1"/>
</dbReference>
<dbReference type="SMR" id="Q5R925"/>
<dbReference type="FunCoup" id="Q5R925">
    <property type="interactions" value="3320"/>
</dbReference>
<dbReference type="STRING" id="9601.ENSPPYP00000013137"/>
<dbReference type="GeneID" id="100172951"/>
<dbReference type="KEGG" id="pon:100172951"/>
<dbReference type="CTD" id="8664"/>
<dbReference type="eggNOG" id="KOG2479">
    <property type="taxonomic scope" value="Eukaryota"/>
</dbReference>
<dbReference type="InParanoid" id="Q5R925"/>
<dbReference type="OrthoDB" id="16538at2759"/>
<dbReference type="Proteomes" id="UP000001595">
    <property type="component" value="Unplaced"/>
</dbReference>
<dbReference type="GO" id="GO:0016282">
    <property type="term" value="C:eukaryotic 43S preinitiation complex"/>
    <property type="evidence" value="ECO:0007669"/>
    <property type="project" value="UniProtKB-UniRule"/>
</dbReference>
<dbReference type="GO" id="GO:0033290">
    <property type="term" value="C:eukaryotic 48S preinitiation complex"/>
    <property type="evidence" value="ECO:0007669"/>
    <property type="project" value="UniProtKB-UniRule"/>
</dbReference>
<dbReference type="GO" id="GO:0005852">
    <property type="term" value="C:eukaryotic translation initiation factor 3 complex"/>
    <property type="evidence" value="ECO:0000250"/>
    <property type="project" value="UniProtKB"/>
</dbReference>
<dbReference type="GO" id="GO:0098808">
    <property type="term" value="F:mRNA cap binding"/>
    <property type="evidence" value="ECO:0000250"/>
    <property type="project" value="UniProtKB"/>
</dbReference>
<dbReference type="GO" id="GO:0003723">
    <property type="term" value="F:RNA binding"/>
    <property type="evidence" value="ECO:0000250"/>
    <property type="project" value="UniProtKB"/>
</dbReference>
<dbReference type="GO" id="GO:0003743">
    <property type="term" value="F:translation initiation factor activity"/>
    <property type="evidence" value="ECO:0007669"/>
    <property type="project" value="UniProtKB-UniRule"/>
</dbReference>
<dbReference type="GO" id="GO:0002191">
    <property type="term" value="P:cap-dependent translational initiation"/>
    <property type="evidence" value="ECO:0000250"/>
    <property type="project" value="UniProtKB"/>
</dbReference>
<dbReference type="GO" id="GO:0001732">
    <property type="term" value="P:formation of cytoplasmic translation initiation complex"/>
    <property type="evidence" value="ECO:0007669"/>
    <property type="project" value="UniProtKB-UniRule"/>
</dbReference>
<dbReference type="GO" id="GO:0006413">
    <property type="term" value="P:translational initiation"/>
    <property type="evidence" value="ECO:0000250"/>
    <property type="project" value="UniProtKB"/>
</dbReference>
<dbReference type="HAMAP" id="MF_03003">
    <property type="entry name" value="eIF3d"/>
    <property type="match status" value="1"/>
</dbReference>
<dbReference type="InterPro" id="IPR007783">
    <property type="entry name" value="eIF3d"/>
</dbReference>
<dbReference type="PANTHER" id="PTHR12399">
    <property type="entry name" value="EUKARYOTIC TRANSLATION INITIATION FACTOR 3 SUBUNIT 7"/>
    <property type="match status" value="1"/>
</dbReference>
<dbReference type="PANTHER" id="PTHR12399:SF0">
    <property type="entry name" value="EUKARYOTIC TRANSLATION INITIATION FACTOR 3 SUBUNIT D"/>
    <property type="match status" value="1"/>
</dbReference>
<dbReference type="Pfam" id="PF05091">
    <property type="entry name" value="eIF-3_zeta"/>
    <property type="match status" value="1"/>
</dbReference>
<dbReference type="PIRSF" id="PIRSF016281">
    <property type="entry name" value="EIF-3_zeta"/>
    <property type="match status" value="1"/>
</dbReference>
<name>EIF3D_PONAB</name>
<protein>
    <recommendedName>
        <fullName evidence="4">Eukaryotic translation initiation factor 3 subunit D</fullName>
        <shortName evidence="4">eIF3d</shortName>
    </recommendedName>
    <alternativeName>
        <fullName evidence="4">Eukaryotic translation initiation factor 3 subunit 7</fullName>
    </alternativeName>
    <alternativeName>
        <fullName evidence="4">eIF-3-zeta</fullName>
    </alternativeName>
</protein>
<proteinExistence type="evidence at transcript level"/>